<evidence type="ECO:0000255" key="1">
    <source>
        <dbReference type="HAMAP-Rule" id="MF_00059"/>
    </source>
</evidence>
<proteinExistence type="inferred from homology"/>
<sequence>MIEIEKPRIETIEISEDAKFGKFVVEPLERGYGTTLGNSLRRILLSSLPGAAVKYIEIEGVLHEFSAVDNVVEDVSTIIMNIKQLALKIYSEEDKTLEIDVRDEGEVTASDITHDSDVEILNPELKIATVSKGGHLKIRLVANKGRGYALAEQNNTSDLPIGVIPVDSLYSPVERVNYTVENTRVGQSSDFDKLTLDVWTNGSITPQESVSLAAKIMTEHLNIFVGLTDEAQNAEIMIEKEEDQKEKVLEMSIEELDLSVRSYNCLKRAGINSVQELADKSEADMMKVRNLGRKSLEEVKYKLEDLGLGLRKED</sequence>
<dbReference type="EC" id="2.7.7.6" evidence="1"/>
<dbReference type="EMBL" id="AP009324">
    <property type="protein sequence ID" value="BAF79091.1"/>
    <property type="molecule type" value="Genomic_DNA"/>
</dbReference>
<dbReference type="RefSeq" id="WP_000569649.1">
    <property type="nucleotide sequence ID" value="NC_009782.1"/>
</dbReference>
<dbReference type="SMR" id="A7X5C4"/>
<dbReference type="KEGG" id="saw:SAHV_2208"/>
<dbReference type="HOGENOM" id="CLU_053084_0_1_9"/>
<dbReference type="GO" id="GO:0005737">
    <property type="term" value="C:cytoplasm"/>
    <property type="evidence" value="ECO:0007669"/>
    <property type="project" value="UniProtKB-ARBA"/>
</dbReference>
<dbReference type="GO" id="GO:0000428">
    <property type="term" value="C:DNA-directed RNA polymerase complex"/>
    <property type="evidence" value="ECO:0007669"/>
    <property type="project" value="UniProtKB-KW"/>
</dbReference>
<dbReference type="GO" id="GO:0003677">
    <property type="term" value="F:DNA binding"/>
    <property type="evidence" value="ECO:0007669"/>
    <property type="project" value="UniProtKB-UniRule"/>
</dbReference>
<dbReference type="GO" id="GO:0003899">
    <property type="term" value="F:DNA-directed RNA polymerase activity"/>
    <property type="evidence" value="ECO:0007669"/>
    <property type="project" value="UniProtKB-UniRule"/>
</dbReference>
<dbReference type="GO" id="GO:0046983">
    <property type="term" value="F:protein dimerization activity"/>
    <property type="evidence" value="ECO:0007669"/>
    <property type="project" value="InterPro"/>
</dbReference>
<dbReference type="GO" id="GO:0006351">
    <property type="term" value="P:DNA-templated transcription"/>
    <property type="evidence" value="ECO:0007669"/>
    <property type="project" value="UniProtKB-UniRule"/>
</dbReference>
<dbReference type="CDD" id="cd06928">
    <property type="entry name" value="RNAP_alpha_NTD"/>
    <property type="match status" value="1"/>
</dbReference>
<dbReference type="FunFam" id="1.10.150.20:FF:000001">
    <property type="entry name" value="DNA-directed RNA polymerase subunit alpha"/>
    <property type="match status" value="1"/>
</dbReference>
<dbReference type="FunFam" id="2.170.120.12:FF:000001">
    <property type="entry name" value="DNA-directed RNA polymerase subunit alpha"/>
    <property type="match status" value="1"/>
</dbReference>
<dbReference type="Gene3D" id="1.10.150.20">
    <property type="entry name" value="5' to 3' exonuclease, C-terminal subdomain"/>
    <property type="match status" value="1"/>
</dbReference>
<dbReference type="Gene3D" id="2.170.120.12">
    <property type="entry name" value="DNA-directed RNA polymerase, insert domain"/>
    <property type="match status" value="1"/>
</dbReference>
<dbReference type="Gene3D" id="3.30.1360.10">
    <property type="entry name" value="RNA polymerase, RBP11-like subunit"/>
    <property type="match status" value="1"/>
</dbReference>
<dbReference type="HAMAP" id="MF_00059">
    <property type="entry name" value="RNApol_bact_RpoA"/>
    <property type="match status" value="1"/>
</dbReference>
<dbReference type="InterPro" id="IPR011262">
    <property type="entry name" value="DNA-dir_RNA_pol_insert"/>
</dbReference>
<dbReference type="InterPro" id="IPR011263">
    <property type="entry name" value="DNA-dir_RNA_pol_RpoA/D/Rpb3"/>
</dbReference>
<dbReference type="InterPro" id="IPR011773">
    <property type="entry name" value="DNA-dir_RpoA"/>
</dbReference>
<dbReference type="InterPro" id="IPR036603">
    <property type="entry name" value="RBP11-like"/>
</dbReference>
<dbReference type="InterPro" id="IPR011260">
    <property type="entry name" value="RNAP_asu_C"/>
</dbReference>
<dbReference type="InterPro" id="IPR036643">
    <property type="entry name" value="RNApol_insert_sf"/>
</dbReference>
<dbReference type="NCBIfam" id="NF003513">
    <property type="entry name" value="PRK05182.1-2"/>
    <property type="match status" value="1"/>
</dbReference>
<dbReference type="NCBIfam" id="NF003515">
    <property type="entry name" value="PRK05182.2-1"/>
    <property type="match status" value="1"/>
</dbReference>
<dbReference type="NCBIfam" id="NF003519">
    <property type="entry name" value="PRK05182.2-5"/>
    <property type="match status" value="1"/>
</dbReference>
<dbReference type="NCBIfam" id="TIGR02027">
    <property type="entry name" value="rpoA"/>
    <property type="match status" value="1"/>
</dbReference>
<dbReference type="Pfam" id="PF01000">
    <property type="entry name" value="RNA_pol_A_bac"/>
    <property type="match status" value="1"/>
</dbReference>
<dbReference type="Pfam" id="PF03118">
    <property type="entry name" value="RNA_pol_A_CTD"/>
    <property type="match status" value="1"/>
</dbReference>
<dbReference type="Pfam" id="PF01193">
    <property type="entry name" value="RNA_pol_L"/>
    <property type="match status" value="1"/>
</dbReference>
<dbReference type="SMART" id="SM00662">
    <property type="entry name" value="RPOLD"/>
    <property type="match status" value="1"/>
</dbReference>
<dbReference type="SUPFAM" id="SSF47789">
    <property type="entry name" value="C-terminal domain of RNA polymerase alpha subunit"/>
    <property type="match status" value="1"/>
</dbReference>
<dbReference type="SUPFAM" id="SSF56553">
    <property type="entry name" value="Insert subdomain of RNA polymerase alpha subunit"/>
    <property type="match status" value="1"/>
</dbReference>
<dbReference type="SUPFAM" id="SSF55257">
    <property type="entry name" value="RBP11-like subunits of RNA polymerase"/>
    <property type="match status" value="1"/>
</dbReference>
<accession>A7X5C4</accession>
<feature type="chain" id="PRO_0000323655" description="DNA-directed RNA polymerase subunit alpha">
    <location>
        <begin position="1"/>
        <end position="314"/>
    </location>
</feature>
<feature type="region of interest" description="Alpha N-terminal domain (alpha-NTD)" evidence="1">
    <location>
        <begin position="1"/>
        <end position="228"/>
    </location>
</feature>
<feature type="region of interest" description="Alpha C-terminal domain (alpha-CTD)" evidence="1">
    <location>
        <begin position="246"/>
        <end position="314"/>
    </location>
</feature>
<reference key="1">
    <citation type="journal article" date="2008" name="Antimicrob. Agents Chemother.">
        <title>Mutated response regulator graR is responsible for phenotypic conversion of Staphylococcus aureus from heterogeneous vancomycin-intermediate resistance to vancomycin-intermediate resistance.</title>
        <authorList>
            <person name="Neoh H.-M."/>
            <person name="Cui L."/>
            <person name="Yuzawa H."/>
            <person name="Takeuchi F."/>
            <person name="Matsuo M."/>
            <person name="Hiramatsu K."/>
        </authorList>
    </citation>
    <scope>NUCLEOTIDE SEQUENCE [LARGE SCALE GENOMIC DNA]</scope>
    <source>
        <strain>Mu3 / ATCC 700698</strain>
    </source>
</reference>
<name>RPOA_STAA1</name>
<organism>
    <name type="scientific">Staphylococcus aureus (strain Mu3 / ATCC 700698)</name>
    <dbReference type="NCBI Taxonomy" id="418127"/>
    <lineage>
        <taxon>Bacteria</taxon>
        <taxon>Bacillati</taxon>
        <taxon>Bacillota</taxon>
        <taxon>Bacilli</taxon>
        <taxon>Bacillales</taxon>
        <taxon>Staphylococcaceae</taxon>
        <taxon>Staphylococcus</taxon>
    </lineage>
</organism>
<keyword id="KW-0240">DNA-directed RNA polymerase</keyword>
<keyword id="KW-0548">Nucleotidyltransferase</keyword>
<keyword id="KW-0804">Transcription</keyword>
<keyword id="KW-0808">Transferase</keyword>
<comment type="function">
    <text evidence="1">DNA-dependent RNA polymerase catalyzes the transcription of DNA into RNA using the four ribonucleoside triphosphates as substrates.</text>
</comment>
<comment type="catalytic activity">
    <reaction evidence="1">
        <text>RNA(n) + a ribonucleoside 5'-triphosphate = RNA(n+1) + diphosphate</text>
        <dbReference type="Rhea" id="RHEA:21248"/>
        <dbReference type="Rhea" id="RHEA-COMP:14527"/>
        <dbReference type="Rhea" id="RHEA-COMP:17342"/>
        <dbReference type="ChEBI" id="CHEBI:33019"/>
        <dbReference type="ChEBI" id="CHEBI:61557"/>
        <dbReference type="ChEBI" id="CHEBI:140395"/>
        <dbReference type="EC" id="2.7.7.6"/>
    </reaction>
</comment>
<comment type="subunit">
    <text evidence="1">Homodimer. The RNAP catalytic core consists of 2 alpha, 1 beta, 1 beta' and 1 omega subunit. When a sigma factor is associated with the core the holoenzyme is formed, which can initiate transcription.</text>
</comment>
<comment type="domain">
    <text evidence="1">The N-terminal domain is essential for RNAP assembly and basal transcription, whereas the C-terminal domain is involved in interaction with transcriptional regulators and with upstream promoter elements.</text>
</comment>
<comment type="similarity">
    <text evidence="1">Belongs to the RNA polymerase alpha chain family.</text>
</comment>
<gene>
    <name evidence="1" type="primary">rpoA</name>
    <name type="ordered locus">SAHV_2208</name>
</gene>
<protein>
    <recommendedName>
        <fullName evidence="1">DNA-directed RNA polymerase subunit alpha</fullName>
        <shortName evidence="1">RNAP subunit alpha</shortName>
        <ecNumber evidence="1">2.7.7.6</ecNumber>
    </recommendedName>
    <alternativeName>
        <fullName evidence="1">RNA polymerase subunit alpha</fullName>
    </alternativeName>
    <alternativeName>
        <fullName evidence="1">Transcriptase subunit alpha</fullName>
    </alternativeName>
</protein>